<proteinExistence type="evidence at protein level"/>
<gene>
    <name evidence="4" type="primary">nptrpdh</name>
</gene>
<protein>
    <recommendedName>
        <fullName evidence="4">L-tryptophan dehydrogenase</fullName>
        <shortName evidence="4">L-Trp dehydrogenase</shortName>
        <shortName evidence="4">TrpDH</shortName>
        <ecNumber evidence="2 3">1.4.1.19</ecNumber>
    </recommendedName>
    <alternativeName>
        <fullName evidence="4">NpTrpDH</fullName>
    </alternativeName>
</protein>
<evidence type="ECO:0000250" key="1">
    <source>
        <dbReference type="UniProtKB" id="Q59771"/>
    </source>
</evidence>
<evidence type="ECO:0000269" key="2">
    <source>
    </source>
</evidence>
<evidence type="ECO:0000269" key="3">
    <source>
    </source>
</evidence>
<evidence type="ECO:0000303" key="4">
    <source>
    </source>
</evidence>
<evidence type="ECO:0000305" key="5"/>
<evidence type="ECO:0000305" key="6">
    <source>
    </source>
</evidence>
<evidence type="ECO:0007744" key="7">
    <source>
        <dbReference type="PDB" id="5B37"/>
    </source>
</evidence>
<evidence type="ECO:0007829" key="8">
    <source>
        <dbReference type="PDB" id="5B37"/>
    </source>
</evidence>
<organism>
    <name type="scientific">Nostoc punctiforme</name>
    <dbReference type="NCBI Taxonomy" id="272131"/>
    <lineage>
        <taxon>Bacteria</taxon>
        <taxon>Bacillati</taxon>
        <taxon>Cyanobacteriota</taxon>
        <taxon>Cyanophyceae</taxon>
        <taxon>Nostocales</taxon>
        <taxon>Nostocaceae</taxon>
        <taxon>Nostoc</taxon>
    </lineage>
</organism>
<reference key="1">
    <citation type="journal article" date="2014" name="Enzyme Microb. Technol.">
        <title>Biochemical characterization of an L-tryptophan dehydrogenase from the photoautotrophic cyanobacterium Nostoc punctiforme.</title>
        <authorList>
            <person name="Ogura R."/>
            <person name="Wakamatsu T."/>
            <person name="Mutaguchi Y."/>
            <person name="Doi K."/>
            <person name="Ohshima T."/>
        </authorList>
    </citation>
    <scope>NUCLEOTIDE SEQUENCE [GENOMIC DNA]</scope>
    <scope>FUNCTION</scope>
    <scope>CATALYTIC ACTIVITY</scope>
    <scope>ACTIVITY REGULATION</scope>
    <scope>BIOPHYSICOCHEMICAL PROPERTIES</scope>
    <scope>SUBUNIT</scope>
    <source>
        <strain>NIES-2108</strain>
    </source>
</reference>
<reference evidence="7" key="2">
    <citation type="journal article" date="2017" name="Appl. Environ. Microbiol.">
        <title>Structural insights into L-tryptophan dehydrogenase from a photoautotrophic cyanobacterium, Nostoc punctiforme.</title>
        <authorList>
            <person name="Wakamatsu T."/>
            <person name="Sakuraba H."/>
            <person name="Kitamura M."/>
            <person name="Hakumai Y."/>
            <person name="Fukui K."/>
            <person name="Ohnishi K."/>
            <person name="Ashiuchi M."/>
            <person name="Ohshima T."/>
        </authorList>
    </citation>
    <scope>X-RAY CRYSTALLOGRAPHY (3.40 ANGSTROMS)</scope>
    <scope>FUNCTION</scope>
    <scope>CATALYTIC ACTIVITY</scope>
    <scope>BIOPHYSICOCHEMICAL PROPERTIES</scope>
    <scope>SUBUNIT</scope>
    <scope>DOMAIN</scope>
    <scope>MUTAGENESIS OF MET-40; MET-65; ALA-69; VAL-132; VAL-133; LEU-288; VAL-291; TYR-292; MET-295 AND ILE-296</scope>
    <source>
        <strain>NIES-2108</strain>
    </source>
</reference>
<comment type="function">
    <text evidence="2 3 6">Catalyzes the reversible oxidative deamination of L-tryptophan to indole-3-pyruvate in the presence of NAD(+) (PubMed:24835098, PubMed:27815281). Shows weak activity with L-phenylalanine, but cannot use other L-amino acids and D-Trp (PubMed:24835098, PubMed:27815281). Cannot use NADP(+) for oxidative deamination of L-Trp, and shows only weak activity with NADPH for reductive amination of indole-3-pyruvate (PubMed:24835098). Involved in the biosynthesis of scytonemin, a cyanobacterial radiation-absorbing pigment (Probable).</text>
</comment>
<comment type="catalytic activity">
    <reaction evidence="2 3">
        <text>L-tryptophan + NAD(+) + H2O = indole-3-pyruvate + NH4(+) + NADH + H(+)</text>
        <dbReference type="Rhea" id="RHEA:13473"/>
        <dbReference type="ChEBI" id="CHEBI:15377"/>
        <dbReference type="ChEBI" id="CHEBI:15378"/>
        <dbReference type="ChEBI" id="CHEBI:17640"/>
        <dbReference type="ChEBI" id="CHEBI:28938"/>
        <dbReference type="ChEBI" id="CHEBI:57540"/>
        <dbReference type="ChEBI" id="CHEBI:57912"/>
        <dbReference type="ChEBI" id="CHEBI:57945"/>
        <dbReference type="EC" id="1.4.1.19"/>
    </reaction>
    <physiologicalReaction direction="left-to-right" evidence="6">
        <dbReference type="Rhea" id="RHEA:13474"/>
    </physiologicalReaction>
</comment>
<comment type="activity regulation">
    <text evidence="2">Highly susceptible to inhibition by indole-3-pyruvate (PubMed:24835098). Activity is not affected by the presence of metal ions, EDTA, KCl or DMSO (PubMed:24835098).</text>
</comment>
<comment type="biophysicochemical properties">
    <kinetics>
        <KM evidence="2">0.031 mM for L-tryptophan</KM>
        <KM evidence="3">0.045 mM for L-tryptophan</KM>
        <KM evidence="3">10 mM for L-phenylalanine</KM>
        <KM evidence="2">0.025 mM for NAD(+)</KM>
        <KM evidence="2">0.014 mM for indole-3-pyruvate</KM>
        <KM evidence="2">0.038 mM for NADH</KM>
        <KM evidence="2">130 mM for NH4(+)</KM>
        <text evidence="2 3">kcat is 4.2 sec(-1) with L-tryptophan as substrate. kcat is 4.3 sec(-1) with NAD(+) as substrate. kcat is 16 sec(-1) with indole-3-pyruvate as substrate. kcat is 21 sec(-1) with NADH as substrate. kcat is 17 sec(-1) with NH4(+) as substrate (PubMed:24835098). kcat is 20 sec(-1) with L-tryptophan as substrate. kcat is 4.3 sec(-1) with L-phenylalanine as substrate (PubMed:27815281).</text>
    </kinetics>
    <phDependence>
        <text evidence="2">Optimum pH is around 11.0 for oxidative deamination (PubMed:24835098). Optimum pH is 7.5 for reductive amination (PubMed:24835098). Retains more than 80% of its activity after incubation for 30 minutes at pH 5.0-11.5 (PubMed:24835098).</text>
    </phDependence>
    <temperatureDependence>
        <text evidence="2">Optimum temperature is 45 degrees Celsius for oxidative deamination at pH 11.0 (PubMed:24835098). No enzyme activity is lost after incubation for 10 minutes at temperatures up to degrees 40 Celsius, but shows complete loss of activity at temperatures above 50 degrees Celsius (PubMed:24835098).</text>
    </temperatureDependence>
</comment>
<comment type="subunit">
    <text evidence="2 3">Homodimer.</text>
</comment>
<comment type="domain">
    <text evidence="3">Contains a substrate-binding domain and an NAD(+)/NADH-binding domain, separated by a deep cleft containing the active site (PubMed:27815281). Several residues in the active site form a hydrophobic cluster, which may be a part of the hydrophobic core essential for protein folding (PubMed:27815281).</text>
</comment>
<comment type="similarity">
    <text evidence="5">Belongs to the Glu/Leu/Phe/Val dehydrogenases family.</text>
</comment>
<accession>W8CV45</accession>
<keyword id="KW-0002">3D-structure</keyword>
<keyword id="KW-0520">NAD</keyword>
<keyword id="KW-0547">Nucleotide-binding</keyword>
<keyword id="KW-0560">Oxidoreductase</keyword>
<feature type="chain" id="PRO_0000457013" description="L-tryptophan dehydrogenase">
    <location>
        <begin position="1"/>
        <end position="353"/>
    </location>
</feature>
<feature type="active site" description="Proton donor/acceptor" evidence="1">
    <location>
        <position position="80"/>
    </location>
</feature>
<feature type="binding site" evidence="1">
    <location>
        <position position="44"/>
    </location>
    <ligand>
        <name>NAD(+)</name>
        <dbReference type="ChEBI" id="CHEBI:57540"/>
    </ligand>
</feature>
<feature type="binding site" evidence="1">
    <location>
        <position position="114"/>
    </location>
    <ligand>
        <name>NAD(+)</name>
        <dbReference type="ChEBI" id="CHEBI:57540"/>
    </ligand>
</feature>
<feature type="binding site" evidence="1">
    <location>
        <position position="146"/>
    </location>
    <ligand>
        <name>NAD(+)</name>
        <dbReference type="ChEBI" id="CHEBI:57540"/>
    </ligand>
</feature>
<feature type="binding site" evidence="1">
    <location>
        <begin position="176"/>
        <end position="181"/>
    </location>
    <ligand>
        <name>NAD(+)</name>
        <dbReference type="ChEBI" id="CHEBI:57540"/>
    </ligand>
</feature>
<feature type="binding site" evidence="1">
    <location>
        <position position="204"/>
    </location>
    <ligand>
        <name>NAD(+)</name>
        <dbReference type="ChEBI" id="CHEBI:57540"/>
    </ligand>
</feature>
<feature type="binding site" evidence="1">
    <location>
        <begin position="255"/>
        <end position="257"/>
    </location>
    <ligand>
        <name>NAD(+)</name>
        <dbReference type="ChEBI" id="CHEBI:57540"/>
    </ligand>
</feature>
<feature type="mutagenesis site" description="1.7-fold decrease in catalytic efficiency." evidence="3">
    <original>M</original>
    <variation>L</variation>
    <location>
        <position position="40"/>
    </location>
</feature>
<feature type="mutagenesis site" description="80-fold decrease in catalytic efficiency." evidence="3">
    <original>M</original>
    <variation>A</variation>
    <location>
        <position position="65"/>
    </location>
</feature>
<feature type="mutagenesis site" description="400-fold decrease in catalytic efficiency." evidence="3">
    <original>A</original>
    <variation>L</variation>
    <location>
        <position position="69"/>
    </location>
</feature>
<feature type="mutagenesis site" description="293-fold decrease in catalytic efficiency." evidence="3">
    <original>A</original>
    <variation>M</variation>
    <location>
        <position position="69"/>
    </location>
</feature>
<feature type="mutagenesis site" description="1.6-fold decrease in catalytic efficiency." evidence="3">
    <original>V</original>
    <variation>A</variation>
    <location>
        <position position="132"/>
    </location>
</feature>
<feature type="mutagenesis site" description="3.1-fold decrease in catalytic efficiency." evidence="3">
    <original>V</original>
    <variation>A</variation>
    <location>
        <position position="133"/>
    </location>
</feature>
<feature type="mutagenesis site" description="586-fold decrease in catalytic efficiency." evidence="3">
    <original>L</original>
    <variation>M</variation>
    <location>
        <position position="288"/>
    </location>
</feature>
<feature type="mutagenesis site" description="7-fold decrease in catalytic efficiency." evidence="3">
    <original>V</original>
    <variation>A</variation>
    <location>
        <position position="291"/>
    </location>
</feature>
<feature type="mutagenesis site" description="Slight increase in catalytic efficiency." evidence="3">
    <original>Y</original>
    <variation>F</variation>
    <location>
        <position position="292"/>
    </location>
</feature>
<feature type="mutagenesis site" description="2.6-fold decrease in catalytic efficiency." evidence="3">
    <original>Y</original>
    <variation>H</variation>
    <location>
        <position position="292"/>
    </location>
</feature>
<feature type="mutagenesis site" description="1.6-fold decrease in catalytic efficiency." evidence="3">
    <original>Y</original>
    <variation>W</variation>
    <location>
        <position position="292"/>
    </location>
</feature>
<feature type="mutagenesis site" description="2.6-fold decrease in catalytic efficiency." evidence="3">
    <original>M</original>
    <variation>A</variation>
    <location>
        <position position="295"/>
    </location>
</feature>
<feature type="mutagenesis site" description="2.6-fold decrease in catalytic efficiency." evidence="3">
    <original>I</original>
    <variation>A</variation>
    <location>
        <position position="296"/>
    </location>
</feature>
<feature type="helix" evidence="8">
    <location>
        <begin position="4"/>
        <end position="10"/>
    </location>
</feature>
<feature type="strand" evidence="8">
    <location>
        <begin position="13"/>
        <end position="19"/>
    </location>
</feature>
<feature type="strand" evidence="8">
    <location>
        <begin position="21"/>
        <end position="23"/>
    </location>
</feature>
<feature type="strand" evidence="8">
    <location>
        <begin position="26"/>
        <end position="33"/>
    </location>
</feature>
<feature type="strand" evidence="8">
    <location>
        <begin position="35"/>
        <end position="44"/>
    </location>
</feature>
<feature type="helix" evidence="8">
    <location>
        <begin position="51"/>
        <end position="71"/>
    </location>
</feature>
<feature type="strand" evidence="8">
    <location>
        <begin position="78"/>
        <end position="84"/>
    </location>
</feature>
<feature type="helix" evidence="8">
    <location>
        <begin position="92"/>
        <end position="104"/>
    </location>
</feature>
<feature type="turn" evidence="8">
    <location>
        <begin position="105"/>
        <end position="107"/>
    </location>
</feature>
<feature type="strand" evidence="8">
    <location>
        <begin position="108"/>
        <end position="112"/>
    </location>
</feature>
<feature type="helix" evidence="8">
    <location>
        <begin position="119"/>
        <end position="124"/>
    </location>
</feature>
<feature type="helix" evidence="8">
    <location>
        <begin position="143"/>
        <end position="162"/>
    </location>
</feature>
<feature type="strand" evidence="8">
    <location>
        <begin position="171"/>
        <end position="175"/>
    </location>
</feature>
<feature type="helix" evidence="8">
    <location>
        <begin position="179"/>
        <end position="189"/>
    </location>
</feature>
<feature type="turn" evidence="8">
    <location>
        <begin position="190"/>
        <end position="192"/>
    </location>
</feature>
<feature type="strand" evidence="8">
    <location>
        <begin position="194"/>
        <end position="198"/>
    </location>
</feature>
<feature type="helix" evidence="8">
    <location>
        <begin position="202"/>
        <end position="204"/>
    </location>
</feature>
<feature type="helix" evidence="8">
    <location>
        <begin position="205"/>
        <end position="212"/>
    </location>
</feature>
<feature type="helix" evidence="8">
    <location>
        <begin position="221"/>
        <end position="223"/>
    </location>
</feature>
<feature type="strand" evidence="8">
    <location>
        <begin position="228"/>
        <end position="232"/>
    </location>
</feature>
<feature type="turn" evidence="8">
    <location>
        <begin position="241"/>
        <end position="246"/>
    </location>
</feature>
<feature type="strand" evidence="8">
    <location>
        <begin position="250"/>
        <end position="252"/>
    </location>
</feature>
<feature type="strand" evidence="8">
    <location>
        <begin position="255"/>
        <end position="258"/>
    </location>
</feature>
<feature type="strand" evidence="8">
    <location>
        <begin position="260"/>
        <end position="262"/>
    </location>
</feature>
<feature type="helix" evidence="8">
    <location>
        <begin position="265"/>
        <end position="273"/>
    </location>
</feature>
<feature type="helix" evidence="8">
    <location>
        <begin position="280"/>
        <end position="283"/>
    </location>
</feature>
<feature type="helix" evidence="8">
    <location>
        <begin position="285"/>
        <end position="296"/>
    </location>
</feature>
<feature type="helix" evidence="8">
    <location>
        <begin position="300"/>
        <end position="306"/>
    </location>
</feature>
<feature type="helix" evidence="8">
    <location>
        <begin position="309"/>
        <end position="324"/>
    </location>
</feature>
<feature type="helix" evidence="8">
    <location>
        <begin position="328"/>
        <end position="342"/>
    </location>
</feature>
<name>TRPDH_NOSPU</name>
<dbReference type="EC" id="1.4.1.19" evidence="2 3"/>
<dbReference type="EMBL" id="KC693752">
    <property type="protein sequence ID" value="AGQ45832.1"/>
    <property type="molecule type" value="Genomic_DNA"/>
</dbReference>
<dbReference type="PDB" id="5B37">
    <property type="method" value="X-ray"/>
    <property type="resolution" value="3.40 A"/>
    <property type="chains" value="A/B/C/D/E/F=1-353"/>
</dbReference>
<dbReference type="PDBsum" id="5B37"/>
<dbReference type="SMR" id="W8CV45"/>
<dbReference type="BRENDA" id="1.4.1.19">
    <property type="organism ID" value="4370"/>
</dbReference>
<dbReference type="GO" id="GO:0000166">
    <property type="term" value="F:nucleotide binding"/>
    <property type="evidence" value="ECO:0007669"/>
    <property type="project" value="UniProtKB-KW"/>
</dbReference>
<dbReference type="GO" id="GO:0050363">
    <property type="term" value="F:tryptophan dehydrogenase activity"/>
    <property type="evidence" value="ECO:0007669"/>
    <property type="project" value="UniProtKB-EC"/>
</dbReference>
<dbReference type="GO" id="GO:0006520">
    <property type="term" value="P:amino acid metabolic process"/>
    <property type="evidence" value="ECO:0007669"/>
    <property type="project" value="InterPro"/>
</dbReference>
<dbReference type="CDD" id="cd01075">
    <property type="entry name" value="NAD_bind_Leu_Phe_Val_DH"/>
    <property type="match status" value="1"/>
</dbReference>
<dbReference type="FunFam" id="3.40.50.10860:FF:000010">
    <property type="entry name" value="Leucine dehydrogenase"/>
    <property type="match status" value="1"/>
</dbReference>
<dbReference type="Gene3D" id="3.40.50.10860">
    <property type="entry name" value="Leucine Dehydrogenase, chain A, domain 1"/>
    <property type="match status" value="1"/>
</dbReference>
<dbReference type="Gene3D" id="3.40.50.720">
    <property type="entry name" value="NAD(P)-binding Rossmann-like Domain"/>
    <property type="match status" value="1"/>
</dbReference>
<dbReference type="InterPro" id="IPR046346">
    <property type="entry name" value="Aminoacid_DH-like_N_sf"/>
</dbReference>
<dbReference type="InterPro" id="IPR006095">
    <property type="entry name" value="Glu/Leu/Phe/Val/Trp_DH"/>
</dbReference>
<dbReference type="InterPro" id="IPR006096">
    <property type="entry name" value="Glu/Leu/Phe/Val/Trp_DH_C"/>
</dbReference>
<dbReference type="InterPro" id="IPR006097">
    <property type="entry name" value="Glu/Leu/Phe/Val/Trp_DH_dimer"/>
</dbReference>
<dbReference type="InterPro" id="IPR033524">
    <property type="entry name" value="Glu/Leu/Phe/Val_DH_AS"/>
</dbReference>
<dbReference type="InterPro" id="IPR016211">
    <property type="entry name" value="Glu/Phe/Leu/Val/Trp_DH_bac/arc"/>
</dbReference>
<dbReference type="InterPro" id="IPR036291">
    <property type="entry name" value="NAD(P)-bd_dom_sf"/>
</dbReference>
<dbReference type="NCBIfam" id="NF035922">
    <property type="entry name" value="Trp_DH_ScyB"/>
    <property type="match status" value="1"/>
</dbReference>
<dbReference type="PANTHER" id="PTHR42722">
    <property type="entry name" value="LEUCINE DEHYDROGENASE"/>
    <property type="match status" value="1"/>
</dbReference>
<dbReference type="PANTHER" id="PTHR42722:SF1">
    <property type="entry name" value="VALINE DEHYDROGENASE"/>
    <property type="match status" value="1"/>
</dbReference>
<dbReference type="Pfam" id="PF00208">
    <property type="entry name" value="ELFV_dehydrog"/>
    <property type="match status" value="2"/>
</dbReference>
<dbReference type="Pfam" id="PF02812">
    <property type="entry name" value="ELFV_dehydrog_N"/>
    <property type="match status" value="1"/>
</dbReference>
<dbReference type="PIRSF" id="PIRSF000188">
    <property type="entry name" value="Phe_leu_dh"/>
    <property type="match status" value="1"/>
</dbReference>
<dbReference type="PRINTS" id="PR00082">
    <property type="entry name" value="GLFDHDRGNASE"/>
</dbReference>
<dbReference type="SMART" id="SM00839">
    <property type="entry name" value="ELFV_dehydrog"/>
    <property type="match status" value="1"/>
</dbReference>
<dbReference type="SUPFAM" id="SSF53223">
    <property type="entry name" value="Aminoacid dehydrogenase-like, N-terminal domain"/>
    <property type="match status" value="1"/>
</dbReference>
<dbReference type="SUPFAM" id="SSF51735">
    <property type="entry name" value="NAD(P)-binding Rossmann-fold domains"/>
    <property type="match status" value="1"/>
</dbReference>
<dbReference type="PROSITE" id="PS00074">
    <property type="entry name" value="GLFV_DEHYDROGENASE"/>
    <property type="match status" value="1"/>
</dbReference>
<sequence>MLLFETVREMGHEQVLFCHSKNPEIKAIIAIHDTTLGPAMGATRILPYINEEAALKDALRLSRGMTYKAACANIPAGGGKAVIIANPENKTDDLLRAYGRFVDSLNGRFITGQDVNITPDDVRTISQETKYVVGVSEKSGGPAPITSLGVFLGIKAAVESRWQSKRLDGMKVAVQGLGNVGKNLCRHLHEHDVQLFVSDVDPIKAEEVKRLFGATVVEPTEIYSLDVDIFAPCALGGILNSHTIPFLQASIIAGAANNQLENEQLHSQMLAKKGILYSPDYVINAGGLINVYNEMIGYDEEKAFKQVHNIYDTLLAIFEIAKEQGVTTNDAARRLAEDRINNSKRSKSKAIAA</sequence>